<protein>
    <recommendedName>
        <fullName evidence="1">Translation initiation factor 6</fullName>
        <shortName evidence="1">aIF-6</shortName>
    </recommendedName>
</protein>
<gene>
    <name evidence="1" type="primary">eif6</name>
    <name type="ordered locus">MK1616</name>
</gene>
<name>IF6_METKA</name>
<evidence type="ECO:0000255" key="1">
    <source>
        <dbReference type="HAMAP-Rule" id="MF_00032"/>
    </source>
</evidence>
<organism>
    <name type="scientific">Methanopyrus kandleri (strain AV19 / DSM 6324 / JCM 9639 / NBRC 100938)</name>
    <dbReference type="NCBI Taxonomy" id="190192"/>
    <lineage>
        <taxon>Archaea</taxon>
        <taxon>Methanobacteriati</taxon>
        <taxon>Methanobacteriota</taxon>
        <taxon>Methanomada group</taxon>
        <taxon>Methanopyri</taxon>
        <taxon>Methanopyrales</taxon>
        <taxon>Methanopyraceae</taxon>
        <taxon>Methanopyrus</taxon>
    </lineage>
</organism>
<proteinExistence type="inferred from homology"/>
<sequence>MTVVKASVHGDPNIGAWIAASEEYAVVAPKVPDDIVERVKEALDVEVVRTTVAGSNLVGALLAVNSNGALFPRHAREHEIRVVRELGVEVDVLPSKMNAVGNLVLTNDHGALVHPDLDDHALEVIESVLGGRVVRGELGGVKTVGSAGVANSKGAVVHPGATEEEMERVSEVLGVDVEVGTVNRGSPYVGVGIVVNSKGAVVGEDTTGPELARLEDALYLI</sequence>
<dbReference type="EMBL" id="AE009439">
    <property type="protein sequence ID" value="AAM02829.1"/>
    <property type="molecule type" value="Genomic_DNA"/>
</dbReference>
<dbReference type="RefSeq" id="WP_011019984.1">
    <property type="nucleotide sequence ID" value="NC_003551.1"/>
</dbReference>
<dbReference type="SMR" id="Q8TUY5"/>
<dbReference type="FunCoup" id="Q8TUY5">
    <property type="interactions" value="142"/>
</dbReference>
<dbReference type="STRING" id="190192.MK1616"/>
<dbReference type="PaxDb" id="190192-MK1616"/>
<dbReference type="EnsemblBacteria" id="AAM02829">
    <property type="protein sequence ID" value="AAM02829"/>
    <property type="gene ID" value="MK1616"/>
</dbReference>
<dbReference type="GeneID" id="1478211"/>
<dbReference type="KEGG" id="mka:MK1616"/>
<dbReference type="PATRIC" id="fig|190192.8.peg.1779"/>
<dbReference type="HOGENOM" id="CLU_071894_1_0_2"/>
<dbReference type="InParanoid" id="Q8TUY5"/>
<dbReference type="OrthoDB" id="33582at2157"/>
<dbReference type="Proteomes" id="UP000001826">
    <property type="component" value="Chromosome"/>
</dbReference>
<dbReference type="GO" id="GO:0043022">
    <property type="term" value="F:ribosome binding"/>
    <property type="evidence" value="ECO:0007669"/>
    <property type="project" value="InterPro"/>
</dbReference>
<dbReference type="GO" id="GO:0003743">
    <property type="term" value="F:translation initiation factor activity"/>
    <property type="evidence" value="ECO:0007669"/>
    <property type="project" value="UniProtKB-UniRule"/>
</dbReference>
<dbReference type="GO" id="GO:0042256">
    <property type="term" value="P:cytosolic ribosome assembly"/>
    <property type="evidence" value="ECO:0007669"/>
    <property type="project" value="InterPro"/>
</dbReference>
<dbReference type="CDD" id="cd00527">
    <property type="entry name" value="IF6"/>
    <property type="match status" value="1"/>
</dbReference>
<dbReference type="Gene3D" id="3.75.10.10">
    <property type="entry name" value="L-arginine/glycine Amidinotransferase, Chain A"/>
    <property type="match status" value="1"/>
</dbReference>
<dbReference type="HAMAP" id="MF_00032">
    <property type="entry name" value="eIF_6"/>
    <property type="match status" value="1"/>
</dbReference>
<dbReference type="InterPro" id="IPR002769">
    <property type="entry name" value="eIF6"/>
</dbReference>
<dbReference type="NCBIfam" id="TIGR00323">
    <property type="entry name" value="eIF-6"/>
    <property type="match status" value="1"/>
</dbReference>
<dbReference type="PANTHER" id="PTHR10784">
    <property type="entry name" value="TRANSLATION INITIATION FACTOR 6"/>
    <property type="match status" value="1"/>
</dbReference>
<dbReference type="Pfam" id="PF01912">
    <property type="entry name" value="eIF-6"/>
    <property type="match status" value="1"/>
</dbReference>
<dbReference type="PIRSF" id="PIRSF006413">
    <property type="entry name" value="IF-6"/>
    <property type="match status" value="1"/>
</dbReference>
<dbReference type="SMART" id="SM00654">
    <property type="entry name" value="eIF6"/>
    <property type="match status" value="1"/>
</dbReference>
<dbReference type="SUPFAM" id="SSF55909">
    <property type="entry name" value="Pentein"/>
    <property type="match status" value="1"/>
</dbReference>
<comment type="function">
    <text evidence="1">Binds to the 50S ribosomal subunit and prevents its association with the 30S ribosomal subunit to form the 70S initiation complex.</text>
</comment>
<comment type="similarity">
    <text evidence="1">Belongs to the eIF-6 family.</text>
</comment>
<keyword id="KW-0396">Initiation factor</keyword>
<keyword id="KW-0648">Protein biosynthesis</keyword>
<keyword id="KW-1185">Reference proteome</keyword>
<feature type="chain" id="PRO_0000153747" description="Translation initiation factor 6">
    <location>
        <begin position="1"/>
        <end position="221"/>
    </location>
</feature>
<reference key="1">
    <citation type="journal article" date="2002" name="Proc. Natl. Acad. Sci. U.S.A.">
        <title>The complete genome of hyperthermophile Methanopyrus kandleri AV19 and monophyly of archaeal methanogens.</title>
        <authorList>
            <person name="Slesarev A.I."/>
            <person name="Mezhevaya K.V."/>
            <person name="Makarova K.S."/>
            <person name="Polushin N.N."/>
            <person name="Shcherbinina O.V."/>
            <person name="Shakhova V.V."/>
            <person name="Belova G.I."/>
            <person name="Aravind L."/>
            <person name="Natale D.A."/>
            <person name="Rogozin I.B."/>
            <person name="Tatusov R.L."/>
            <person name="Wolf Y.I."/>
            <person name="Stetter K.O."/>
            <person name="Malykh A.G."/>
            <person name="Koonin E.V."/>
            <person name="Kozyavkin S.A."/>
        </authorList>
    </citation>
    <scope>NUCLEOTIDE SEQUENCE [LARGE SCALE GENOMIC DNA]</scope>
    <source>
        <strain>AV19 / DSM 6324 / JCM 9639 / NBRC 100938</strain>
    </source>
</reference>
<accession>Q8TUY5</accession>